<gene>
    <name evidence="1" type="primary">glgA</name>
    <name type="ordered locus">Paes_2020</name>
</gene>
<dbReference type="EC" id="2.4.1.21" evidence="1"/>
<dbReference type="EMBL" id="CP001108">
    <property type="protein sequence ID" value="ACF47030.1"/>
    <property type="molecule type" value="Genomic_DNA"/>
</dbReference>
<dbReference type="RefSeq" id="WP_012506563.1">
    <property type="nucleotide sequence ID" value="NC_011059.1"/>
</dbReference>
<dbReference type="SMR" id="B4S584"/>
<dbReference type="STRING" id="290512.Paes_2020"/>
<dbReference type="CAZy" id="GT5">
    <property type="family name" value="Glycosyltransferase Family 5"/>
</dbReference>
<dbReference type="KEGG" id="paa:Paes_2020"/>
<dbReference type="eggNOG" id="COG0297">
    <property type="taxonomic scope" value="Bacteria"/>
</dbReference>
<dbReference type="HOGENOM" id="CLU_009583_18_0_10"/>
<dbReference type="UniPathway" id="UPA00164"/>
<dbReference type="Proteomes" id="UP000002725">
    <property type="component" value="Chromosome"/>
</dbReference>
<dbReference type="GO" id="GO:0009011">
    <property type="term" value="F:alpha-1,4-glucan glucosyltransferase (ADP-glucose donor) activity"/>
    <property type="evidence" value="ECO:0007669"/>
    <property type="project" value="UniProtKB-UniRule"/>
</dbReference>
<dbReference type="GO" id="GO:0004373">
    <property type="term" value="F:alpha-1,4-glucan glucosyltransferase (UDP-glucose donor) activity"/>
    <property type="evidence" value="ECO:0007669"/>
    <property type="project" value="InterPro"/>
</dbReference>
<dbReference type="GO" id="GO:0005978">
    <property type="term" value="P:glycogen biosynthetic process"/>
    <property type="evidence" value="ECO:0007669"/>
    <property type="project" value="UniProtKB-UniRule"/>
</dbReference>
<dbReference type="CDD" id="cd03791">
    <property type="entry name" value="GT5_Glycogen_synthase_DULL1-like"/>
    <property type="match status" value="1"/>
</dbReference>
<dbReference type="Gene3D" id="3.40.50.2000">
    <property type="entry name" value="Glycogen Phosphorylase B"/>
    <property type="match status" value="2"/>
</dbReference>
<dbReference type="HAMAP" id="MF_00484">
    <property type="entry name" value="Glycogen_synth"/>
    <property type="match status" value="1"/>
</dbReference>
<dbReference type="InterPro" id="IPR001296">
    <property type="entry name" value="Glyco_trans_1"/>
</dbReference>
<dbReference type="InterPro" id="IPR011835">
    <property type="entry name" value="GS/SS"/>
</dbReference>
<dbReference type="InterPro" id="IPR013534">
    <property type="entry name" value="Starch_synth_cat_dom"/>
</dbReference>
<dbReference type="NCBIfam" id="TIGR02095">
    <property type="entry name" value="glgA"/>
    <property type="match status" value="1"/>
</dbReference>
<dbReference type="NCBIfam" id="NF010698">
    <property type="entry name" value="PRK14098.1"/>
    <property type="match status" value="1"/>
</dbReference>
<dbReference type="PANTHER" id="PTHR45825:SF11">
    <property type="entry name" value="ALPHA AMYLASE DOMAIN-CONTAINING PROTEIN"/>
    <property type="match status" value="1"/>
</dbReference>
<dbReference type="PANTHER" id="PTHR45825">
    <property type="entry name" value="GRANULE-BOUND STARCH SYNTHASE 1, CHLOROPLASTIC/AMYLOPLASTIC"/>
    <property type="match status" value="1"/>
</dbReference>
<dbReference type="Pfam" id="PF08323">
    <property type="entry name" value="Glyco_transf_5"/>
    <property type="match status" value="1"/>
</dbReference>
<dbReference type="Pfam" id="PF00534">
    <property type="entry name" value="Glycos_transf_1"/>
    <property type="match status" value="1"/>
</dbReference>
<dbReference type="SUPFAM" id="SSF53756">
    <property type="entry name" value="UDP-Glycosyltransferase/glycogen phosphorylase"/>
    <property type="match status" value="1"/>
</dbReference>
<feature type="chain" id="PRO_1000126090" description="Glycogen synthase">
    <location>
        <begin position="1"/>
        <end position="491"/>
    </location>
</feature>
<feature type="binding site" evidence="1">
    <location>
        <position position="20"/>
    </location>
    <ligand>
        <name>ADP-alpha-D-glucose</name>
        <dbReference type="ChEBI" id="CHEBI:57498"/>
    </ligand>
</feature>
<evidence type="ECO:0000255" key="1">
    <source>
        <dbReference type="HAMAP-Rule" id="MF_00484"/>
    </source>
</evidence>
<reference key="1">
    <citation type="submission" date="2008-06" db="EMBL/GenBank/DDBJ databases">
        <title>Complete sequence of chromosome of Prosthecochloris aestuarii DSM 271.</title>
        <authorList>
            <consortium name="US DOE Joint Genome Institute"/>
            <person name="Lucas S."/>
            <person name="Copeland A."/>
            <person name="Lapidus A."/>
            <person name="Glavina del Rio T."/>
            <person name="Dalin E."/>
            <person name="Tice H."/>
            <person name="Bruce D."/>
            <person name="Goodwin L."/>
            <person name="Pitluck S."/>
            <person name="Schmutz J."/>
            <person name="Larimer F."/>
            <person name="Land M."/>
            <person name="Hauser L."/>
            <person name="Kyrpides N."/>
            <person name="Anderson I."/>
            <person name="Liu Z."/>
            <person name="Li T."/>
            <person name="Zhao F."/>
            <person name="Overmann J."/>
            <person name="Bryant D.A."/>
            <person name="Richardson P."/>
        </authorList>
    </citation>
    <scope>NUCLEOTIDE SEQUENCE [LARGE SCALE GENOMIC DNA]</scope>
    <source>
        <strain>DSM 271 / SK 413</strain>
    </source>
</reference>
<accession>B4S584</accession>
<sequence>MSRSTCKVLYVSGEISPFIRVSALADFMASFPHAMEEEGCEARIMMPKYGVINDRKFRLHDVLRLSDIEVRSKEKTDLLHVKVTALPSSKIQTYFLYNEKYFKRNALFADMQQGSDVKNSLERVVFFNLGVLETLQRLGWKPDIIHCQDWYAGLVPLLLKTMYADCEFFKDIRTVLTVHNAYRQGIYPLKGFKKMLPSEVIDKMHVEDDTVNMLFTAVEHFDAVTTTSDAYAGMLADGRSEAFGLDRVIEKRASGLVGIANGLDAKQWNPAADKMIKKKFDIERLSEKTENKKYLLEEFGMELEEATPLVGSVINAERFQGSELLMESIDGLMELDIQLVVSVSGDKELIRRLQEKAKAYPEKLAVYSEFSDAIFHQIMASSDLLLIPAEVESCGMMQLFAIAYGSVPVVYTAGGNIETIEEIAGDKNGSAFVFHEYSVESLLATFEDALHTYADGERWERIVTGNMVRDLTWKNSAAKYNELYQGVRGGE</sequence>
<comment type="function">
    <text evidence="1">Synthesizes alpha-1,4-glucan chains using ADP-glucose.</text>
</comment>
<comment type="catalytic activity">
    <reaction evidence="1">
        <text>[(1-&gt;4)-alpha-D-glucosyl](n) + ADP-alpha-D-glucose = [(1-&gt;4)-alpha-D-glucosyl](n+1) + ADP + H(+)</text>
        <dbReference type="Rhea" id="RHEA:18189"/>
        <dbReference type="Rhea" id="RHEA-COMP:9584"/>
        <dbReference type="Rhea" id="RHEA-COMP:9587"/>
        <dbReference type="ChEBI" id="CHEBI:15378"/>
        <dbReference type="ChEBI" id="CHEBI:15444"/>
        <dbReference type="ChEBI" id="CHEBI:57498"/>
        <dbReference type="ChEBI" id="CHEBI:456216"/>
        <dbReference type="EC" id="2.4.1.21"/>
    </reaction>
</comment>
<comment type="pathway">
    <text evidence="1">Glycan biosynthesis; glycogen biosynthesis.</text>
</comment>
<comment type="similarity">
    <text evidence="1">Belongs to the glycosyltransferase 1 family. Bacterial/plant glycogen synthase subfamily.</text>
</comment>
<name>GLGA_PROA2</name>
<organism>
    <name type="scientific">Prosthecochloris aestuarii (strain DSM 271 / SK 413)</name>
    <dbReference type="NCBI Taxonomy" id="290512"/>
    <lineage>
        <taxon>Bacteria</taxon>
        <taxon>Pseudomonadati</taxon>
        <taxon>Chlorobiota</taxon>
        <taxon>Chlorobiia</taxon>
        <taxon>Chlorobiales</taxon>
        <taxon>Chlorobiaceae</taxon>
        <taxon>Prosthecochloris</taxon>
    </lineage>
</organism>
<keyword id="KW-0320">Glycogen biosynthesis</keyword>
<keyword id="KW-0328">Glycosyltransferase</keyword>
<keyword id="KW-0808">Transferase</keyword>
<protein>
    <recommendedName>
        <fullName evidence="1">Glycogen synthase</fullName>
        <ecNumber evidence="1">2.4.1.21</ecNumber>
    </recommendedName>
    <alternativeName>
        <fullName evidence="1">Starch [bacterial glycogen] synthase</fullName>
    </alternativeName>
</protein>
<proteinExistence type="inferred from homology"/>